<organism>
    <name type="scientific">Yersinia pestis bv. Antiqua (strain Nepal516)</name>
    <dbReference type="NCBI Taxonomy" id="377628"/>
    <lineage>
        <taxon>Bacteria</taxon>
        <taxon>Pseudomonadati</taxon>
        <taxon>Pseudomonadota</taxon>
        <taxon>Gammaproteobacteria</taxon>
        <taxon>Enterobacterales</taxon>
        <taxon>Yersiniaceae</taxon>
        <taxon>Yersinia</taxon>
    </lineage>
</organism>
<name>CYSG2_YERPN</name>
<comment type="function">
    <text evidence="1">Multifunctional enzyme that catalyzes the SAM-dependent methylations of uroporphyrinogen III at position C-2 and C-7 to form precorrin-2 via precorrin-1. Then it catalyzes the NAD-dependent ring dehydrogenation of precorrin-2 to yield sirohydrochlorin. Finally, it catalyzes the ferrochelation of sirohydrochlorin to yield siroheme.</text>
</comment>
<comment type="catalytic activity">
    <reaction evidence="1">
        <text>uroporphyrinogen III + 2 S-adenosyl-L-methionine = precorrin-2 + 2 S-adenosyl-L-homocysteine + H(+)</text>
        <dbReference type="Rhea" id="RHEA:32459"/>
        <dbReference type="ChEBI" id="CHEBI:15378"/>
        <dbReference type="ChEBI" id="CHEBI:57308"/>
        <dbReference type="ChEBI" id="CHEBI:57856"/>
        <dbReference type="ChEBI" id="CHEBI:58827"/>
        <dbReference type="ChEBI" id="CHEBI:59789"/>
        <dbReference type="EC" id="2.1.1.107"/>
    </reaction>
</comment>
<comment type="catalytic activity">
    <reaction evidence="1">
        <text>precorrin-2 + NAD(+) = sirohydrochlorin + NADH + 2 H(+)</text>
        <dbReference type="Rhea" id="RHEA:15613"/>
        <dbReference type="ChEBI" id="CHEBI:15378"/>
        <dbReference type="ChEBI" id="CHEBI:57540"/>
        <dbReference type="ChEBI" id="CHEBI:57945"/>
        <dbReference type="ChEBI" id="CHEBI:58351"/>
        <dbReference type="ChEBI" id="CHEBI:58827"/>
        <dbReference type="EC" id="1.3.1.76"/>
    </reaction>
</comment>
<comment type="catalytic activity">
    <reaction evidence="1">
        <text>siroheme + 2 H(+) = sirohydrochlorin + Fe(2+)</text>
        <dbReference type="Rhea" id="RHEA:24360"/>
        <dbReference type="ChEBI" id="CHEBI:15378"/>
        <dbReference type="ChEBI" id="CHEBI:29033"/>
        <dbReference type="ChEBI" id="CHEBI:58351"/>
        <dbReference type="ChEBI" id="CHEBI:60052"/>
        <dbReference type="EC" id="4.99.1.4"/>
    </reaction>
</comment>
<comment type="pathway">
    <text evidence="1">Cofactor biosynthesis; adenosylcobalamin biosynthesis; precorrin-2 from uroporphyrinogen III: step 1/1.</text>
</comment>
<comment type="pathway">
    <text evidence="1">Cofactor biosynthesis; adenosylcobalamin biosynthesis; sirohydrochlorin from precorrin-2: step 1/1.</text>
</comment>
<comment type="pathway">
    <text evidence="1">Porphyrin-containing compound metabolism; siroheme biosynthesis; precorrin-2 from uroporphyrinogen III: step 1/1.</text>
</comment>
<comment type="pathway">
    <text evidence="1">Porphyrin-containing compound metabolism; siroheme biosynthesis; siroheme from sirohydrochlorin: step 1/1.</text>
</comment>
<comment type="pathway">
    <text evidence="1">Porphyrin-containing compound metabolism; siroheme biosynthesis; sirohydrochlorin from precorrin-2: step 1/1.</text>
</comment>
<comment type="similarity">
    <text evidence="1">In the N-terminal section; belongs to the precorrin-2 dehydrogenase / sirohydrochlorin ferrochelatase family.</text>
</comment>
<comment type="similarity">
    <text evidence="1">In the C-terminal section; belongs to the precorrin methyltransferase family.</text>
</comment>
<reference key="1">
    <citation type="journal article" date="2006" name="J. Bacteriol.">
        <title>Complete genome sequence of Yersinia pestis strains Antiqua and Nepal516: evidence of gene reduction in an emerging pathogen.</title>
        <authorList>
            <person name="Chain P.S.G."/>
            <person name="Hu P."/>
            <person name="Malfatti S.A."/>
            <person name="Radnedge L."/>
            <person name="Larimer F."/>
            <person name="Vergez L.M."/>
            <person name="Worsham P."/>
            <person name="Chu M.C."/>
            <person name="Andersen G.L."/>
        </authorList>
    </citation>
    <scope>NUCLEOTIDE SEQUENCE [LARGE SCALE GENOMIC DNA]</scope>
    <source>
        <strain>Nepal516</strain>
    </source>
</reference>
<reference key="2">
    <citation type="submission" date="2009-04" db="EMBL/GenBank/DDBJ databases">
        <title>Yersinia pestis Nepal516A whole genome shotgun sequencing project.</title>
        <authorList>
            <person name="Plunkett G. III"/>
            <person name="Anderson B.D."/>
            <person name="Baumler D.J."/>
            <person name="Burland V."/>
            <person name="Cabot E.L."/>
            <person name="Glasner J.D."/>
            <person name="Mau B."/>
            <person name="Neeno-Eckwall E."/>
            <person name="Perna N.T."/>
            <person name="Munk A.C."/>
            <person name="Tapia R."/>
            <person name="Green L.D."/>
            <person name="Rogers Y.C."/>
            <person name="Detter J.C."/>
            <person name="Bruce D.C."/>
            <person name="Brettin T.S."/>
        </authorList>
    </citation>
    <scope>NUCLEOTIDE SEQUENCE [LARGE SCALE GENOMIC DNA]</scope>
    <source>
        <strain>Nepal516</strain>
    </source>
</reference>
<evidence type="ECO:0000255" key="1">
    <source>
        <dbReference type="HAMAP-Rule" id="MF_01646"/>
    </source>
</evidence>
<keyword id="KW-0169">Cobalamin biosynthesis</keyword>
<keyword id="KW-0456">Lyase</keyword>
<keyword id="KW-0489">Methyltransferase</keyword>
<keyword id="KW-0511">Multifunctional enzyme</keyword>
<keyword id="KW-0520">NAD</keyword>
<keyword id="KW-0560">Oxidoreductase</keyword>
<keyword id="KW-0597">Phosphoprotein</keyword>
<keyword id="KW-0627">Porphyrin biosynthesis</keyword>
<keyword id="KW-0949">S-adenosyl-L-methionine</keyword>
<keyword id="KW-0808">Transferase</keyword>
<dbReference type="EC" id="2.1.1.107" evidence="1"/>
<dbReference type="EC" id="1.3.1.76" evidence="1"/>
<dbReference type="EC" id="4.99.1.4" evidence="1"/>
<dbReference type="EMBL" id="CP000305">
    <property type="protein sequence ID" value="ABG20234.1"/>
    <property type="molecule type" value="Genomic_DNA"/>
</dbReference>
<dbReference type="EMBL" id="ACNQ01000019">
    <property type="protein sequence ID" value="EEO74827.1"/>
    <property type="molecule type" value="Genomic_DNA"/>
</dbReference>
<dbReference type="SMR" id="Q1CCP6"/>
<dbReference type="KEGG" id="ypn:YPN_3907"/>
<dbReference type="HOGENOM" id="CLU_011276_2_0_6"/>
<dbReference type="UniPathway" id="UPA00148">
    <property type="reaction ID" value="UER00211"/>
</dbReference>
<dbReference type="UniPathway" id="UPA00148">
    <property type="reaction ID" value="UER00222"/>
</dbReference>
<dbReference type="UniPathway" id="UPA00262">
    <property type="reaction ID" value="UER00211"/>
</dbReference>
<dbReference type="UniPathway" id="UPA00262">
    <property type="reaction ID" value="UER00222"/>
</dbReference>
<dbReference type="UniPathway" id="UPA00262">
    <property type="reaction ID" value="UER00376"/>
</dbReference>
<dbReference type="Proteomes" id="UP000008936">
    <property type="component" value="Chromosome"/>
</dbReference>
<dbReference type="GO" id="GO:0051287">
    <property type="term" value="F:NAD binding"/>
    <property type="evidence" value="ECO:0007669"/>
    <property type="project" value="InterPro"/>
</dbReference>
<dbReference type="GO" id="GO:0043115">
    <property type="term" value="F:precorrin-2 dehydrogenase activity"/>
    <property type="evidence" value="ECO:0007669"/>
    <property type="project" value="UniProtKB-UniRule"/>
</dbReference>
<dbReference type="GO" id="GO:0051266">
    <property type="term" value="F:sirohydrochlorin ferrochelatase activity"/>
    <property type="evidence" value="ECO:0007669"/>
    <property type="project" value="UniProtKB-EC"/>
</dbReference>
<dbReference type="GO" id="GO:0004851">
    <property type="term" value="F:uroporphyrin-III C-methyltransferase activity"/>
    <property type="evidence" value="ECO:0007669"/>
    <property type="project" value="UniProtKB-UniRule"/>
</dbReference>
<dbReference type="GO" id="GO:0009236">
    <property type="term" value="P:cobalamin biosynthetic process"/>
    <property type="evidence" value="ECO:0007669"/>
    <property type="project" value="UniProtKB-UniRule"/>
</dbReference>
<dbReference type="GO" id="GO:0032259">
    <property type="term" value="P:methylation"/>
    <property type="evidence" value="ECO:0007669"/>
    <property type="project" value="UniProtKB-KW"/>
</dbReference>
<dbReference type="GO" id="GO:0019354">
    <property type="term" value="P:siroheme biosynthetic process"/>
    <property type="evidence" value="ECO:0007669"/>
    <property type="project" value="UniProtKB-UniRule"/>
</dbReference>
<dbReference type="CDD" id="cd11642">
    <property type="entry name" value="SUMT"/>
    <property type="match status" value="1"/>
</dbReference>
<dbReference type="FunFam" id="3.30.160.110:FF:000001">
    <property type="entry name" value="Siroheme synthase"/>
    <property type="match status" value="1"/>
</dbReference>
<dbReference type="FunFam" id="3.30.950.10:FF:000001">
    <property type="entry name" value="Siroheme synthase"/>
    <property type="match status" value="1"/>
</dbReference>
<dbReference type="FunFam" id="3.40.1010.10:FF:000001">
    <property type="entry name" value="Siroheme synthase"/>
    <property type="match status" value="1"/>
</dbReference>
<dbReference type="FunFam" id="3.40.50.720:FF:000092">
    <property type="entry name" value="Siroheme synthase"/>
    <property type="match status" value="1"/>
</dbReference>
<dbReference type="Gene3D" id="3.40.1010.10">
    <property type="entry name" value="Cobalt-precorrin-4 Transmethylase, Domain 1"/>
    <property type="match status" value="1"/>
</dbReference>
<dbReference type="Gene3D" id="3.30.950.10">
    <property type="entry name" value="Methyltransferase, Cobalt-precorrin-4 Transmethylase, Domain 2"/>
    <property type="match status" value="1"/>
</dbReference>
<dbReference type="Gene3D" id="3.40.50.720">
    <property type="entry name" value="NAD(P)-binding Rossmann-like Domain"/>
    <property type="match status" value="1"/>
</dbReference>
<dbReference type="Gene3D" id="1.10.8.210">
    <property type="entry name" value="Sirohaem synthase, dimerisation domain"/>
    <property type="match status" value="1"/>
</dbReference>
<dbReference type="Gene3D" id="3.30.160.110">
    <property type="entry name" value="Siroheme synthase, domain 2"/>
    <property type="match status" value="1"/>
</dbReference>
<dbReference type="HAMAP" id="MF_01646">
    <property type="entry name" value="Siroheme_synth"/>
    <property type="match status" value="1"/>
</dbReference>
<dbReference type="InterPro" id="IPR000878">
    <property type="entry name" value="4pyrrol_Mease"/>
</dbReference>
<dbReference type="InterPro" id="IPR035996">
    <property type="entry name" value="4pyrrol_Methylase_sf"/>
</dbReference>
<dbReference type="InterPro" id="IPR014777">
    <property type="entry name" value="4pyrrole_Mease_sub1"/>
</dbReference>
<dbReference type="InterPro" id="IPR014776">
    <property type="entry name" value="4pyrrole_Mease_sub2"/>
</dbReference>
<dbReference type="InterPro" id="IPR006366">
    <property type="entry name" value="CobA/CysG_C"/>
</dbReference>
<dbReference type="InterPro" id="IPR036291">
    <property type="entry name" value="NAD(P)-bd_dom_sf"/>
</dbReference>
<dbReference type="InterPro" id="IPR050161">
    <property type="entry name" value="Siro_Cobalamin_biosynth"/>
</dbReference>
<dbReference type="InterPro" id="IPR037115">
    <property type="entry name" value="Sirohaem_synt_dimer_dom_sf"/>
</dbReference>
<dbReference type="InterPro" id="IPR012409">
    <property type="entry name" value="Sirohaem_synth"/>
</dbReference>
<dbReference type="InterPro" id="IPR028281">
    <property type="entry name" value="Sirohaem_synthase_central"/>
</dbReference>
<dbReference type="InterPro" id="IPR019478">
    <property type="entry name" value="Sirohaem_synthase_dimer_dom"/>
</dbReference>
<dbReference type="InterPro" id="IPR006367">
    <property type="entry name" value="Sirohaem_synthase_N"/>
</dbReference>
<dbReference type="InterPro" id="IPR003043">
    <property type="entry name" value="Uropor_MeTrfase_CS"/>
</dbReference>
<dbReference type="NCBIfam" id="TIGR01469">
    <property type="entry name" value="cobA_cysG_Cterm"/>
    <property type="match status" value="1"/>
</dbReference>
<dbReference type="NCBIfam" id="TIGR01470">
    <property type="entry name" value="cysG_Nterm"/>
    <property type="match status" value="1"/>
</dbReference>
<dbReference type="NCBIfam" id="NF004790">
    <property type="entry name" value="PRK06136.1"/>
    <property type="match status" value="1"/>
</dbReference>
<dbReference type="NCBIfam" id="NF007922">
    <property type="entry name" value="PRK10637.1"/>
    <property type="match status" value="1"/>
</dbReference>
<dbReference type="PANTHER" id="PTHR45790:SF1">
    <property type="entry name" value="SIROHEME SYNTHASE"/>
    <property type="match status" value="1"/>
</dbReference>
<dbReference type="PANTHER" id="PTHR45790">
    <property type="entry name" value="SIROHEME SYNTHASE-RELATED"/>
    <property type="match status" value="1"/>
</dbReference>
<dbReference type="Pfam" id="PF10414">
    <property type="entry name" value="CysG_dimeriser"/>
    <property type="match status" value="1"/>
</dbReference>
<dbReference type="Pfam" id="PF13241">
    <property type="entry name" value="NAD_binding_7"/>
    <property type="match status" value="1"/>
</dbReference>
<dbReference type="Pfam" id="PF14824">
    <property type="entry name" value="Sirohm_synth_M"/>
    <property type="match status" value="1"/>
</dbReference>
<dbReference type="Pfam" id="PF00590">
    <property type="entry name" value="TP_methylase"/>
    <property type="match status" value="1"/>
</dbReference>
<dbReference type="PIRSF" id="PIRSF036426">
    <property type="entry name" value="Sirohaem_synth"/>
    <property type="match status" value="1"/>
</dbReference>
<dbReference type="SUPFAM" id="SSF51735">
    <property type="entry name" value="NAD(P)-binding Rossmann-fold domains"/>
    <property type="match status" value="1"/>
</dbReference>
<dbReference type="SUPFAM" id="SSF75615">
    <property type="entry name" value="Siroheme synthase middle domains-like"/>
    <property type="match status" value="1"/>
</dbReference>
<dbReference type="SUPFAM" id="SSF53790">
    <property type="entry name" value="Tetrapyrrole methylase"/>
    <property type="match status" value="1"/>
</dbReference>
<dbReference type="PROSITE" id="PS00839">
    <property type="entry name" value="SUMT_1"/>
    <property type="match status" value="1"/>
</dbReference>
<dbReference type="PROSITE" id="PS00840">
    <property type="entry name" value="SUMT_2"/>
    <property type="match status" value="1"/>
</dbReference>
<sequence length="470" mass="51664">MDYFPIFCQLQHKACLLVGGGEIAERKARLLLDAGALVTVNACEFTPQFHHWADQGQLSLISGEFVPELLADKWLVIAATDQLSVNALVYQSANQQRIFCNVVDDPKRTSFIMPSIIDRSPIMIAVSSGGKAPVLARLLREKLEALLPQHLGQLAGNLRQRVKQHFTVMTERRRFWEKLLTHDRLAQSLANNDHVQADQHVEQLFSAPLTDRGEVVLVGAGPGDAGLLTLKGLQQIQQADVVVYDRLVSDEVMNLVRRDAERIFVGKQSGHHCVPQEQINQILLQQAQSGKRVVRLKGGDPFIFGRGGEELEELAGYGIPFSVVPGITAASGCSAYSGIPLTHRDHAQSVRLVTGHAKKEGQLDWANLAAEKQTLVFYMGLSQAGEIQQQLIQHGMPATTQVALVENGTSRHQRVVSGELSQLALLSQQVSSPSLIIVGSVVSLREKLNWFSSRHHDDQPKVTECVAHVG</sequence>
<protein>
    <recommendedName>
        <fullName evidence="1">Siroheme synthase 2</fullName>
    </recommendedName>
    <domain>
        <recommendedName>
            <fullName evidence="1">Uroporphyrinogen-III C-methyltransferase 2</fullName>
            <shortName evidence="1">Urogen III methylase 2</shortName>
            <ecNumber evidence="1">2.1.1.107</ecNumber>
        </recommendedName>
        <alternativeName>
            <fullName evidence="1">SUMT 2</fullName>
        </alternativeName>
        <alternativeName>
            <fullName evidence="1">Uroporphyrinogen III methylase 2</fullName>
            <shortName evidence="1">UROM 2</shortName>
        </alternativeName>
    </domain>
    <domain>
        <recommendedName>
            <fullName evidence="1">Precorrin-2 dehydrogenase 2</fullName>
            <ecNumber evidence="1">1.3.1.76</ecNumber>
        </recommendedName>
    </domain>
    <domain>
        <recommendedName>
            <fullName evidence="1">Sirohydrochlorin ferrochelatase 2</fullName>
            <ecNumber evidence="1">4.99.1.4</ecNumber>
        </recommendedName>
    </domain>
</protein>
<feature type="chain" id="PRO_0000330575" description="Siroheme synthase 2">
    <location>
        <begin position="1"/>
        <end position="470"/>
    </location>
</feature>
<feature type="region of interest" description="Precorrin-2 dehydrogenase /sirohydrochlorin ferrochelatase" evidence="1">
    <location>
        <begin position="1"/>
        <end position="201"/>
    </location>
</feature>
<feature type="region of interest" description="Uroporphyrinogen-III C-methyltransferase" evidence="1">
    <location>
        <begin position="213"/>
        <end position="470"/>
    </location>
</feature>
<feature type="active site" description="Proton acceptor" evidence="1">
    <location>
        <position position="245"/>
    </location>
</feature>
<feature type="active site" description="Proton donor" evidence="1">
    <location>
        <position position="267"/>
    </location>
</feature>
<feature type="binding site" evidence="1">
    <location>
        <begin position="22"/>
        <end position="23"/>
    </location>
    <ligand>
        <name>NAD(+)</name>
        <dbReference type="ChEBI" id="CHEBI:57540"/>
    </ligand>
</feature>
<feature type="binding site" evidence="1">
    <location>
        <begin position="43"/>
        <end position="44"/>
    </location>
    <ligand>
        <name>NAD(+)</name>
        <dbReference type="ChEBI" id="CHEBI:57540"/>
    </ligand>
</feature>
<feature type="binding site" evidence="1">
    <location>
        <position position="222"/>
    </location>
    <ligand>
        <name>S-adenosyl-L-methionine</name>
        <dbReference type="ChEBI" id="CHEBI:59789"/>
    </ligand>
</feature>
<feature type="binding site" evidence="1">
    <location>
        <begin position="298"/>
        <end position="300"/>
    </location>
    <ligand>
        <name>S-adenosyl-L-methionine</name>
        <dbReference type="ChEBI" id="CHEBI:59789"/>
    </ligand>
</feature>
<feature type="binding site" evidence="1">
    <location>
        <position position="303"/>
    </location>
    <ligand>
        <name>S-adenosyl-L-methionine</name>
        <dbReference type="ChEBI" id="CHEBI:59789"/>
    </ligand>
</feature>
<feature type="binding site" evidence="1">
    <location>
        <begin position="328"/>
        <end position="329"/>
    </location>
    <ligand>
        <name>S-adenosyl-L-methionine</name>
        <dbReference type="ChEBI" id="CHEBI:59789"/>
    </ligand>
</feature>
<feature type="binding site" evidence="1">
    <location>
        <position position="379"/>
    </location>
    <ligand>
        <name>S-adenosyl-L-methionine</name>
        <dbReference type="ChEBI" id="CHEBI:59789"/>
    </ligand>
</feature>
<feature type="binding site" evidence="1">
    <location>
        <position position="408"/>
    </location>
    <ligand>
        <name>S-adenosyl-L-methionine</name>
        <dbReference type="ChEBI" id="CHEBI:59789"/>
    </ligand>
</feature>
<feature type="modified residue" description="Phosphoserine" evidence="1">
    <location>
        <position position="128"/>
    </location>
</feature>
<accession>Q1CCP6</accession>
<accession>D1Q2S4</accession>
<gene>
    <name evidence="1" type="primary">cysG2</name>
    <name type="ordered locus">YPN_3907</name>
    <name type="ORF">YP516_4437</name>
</gene>
<proteinExistence type="inferred from homology"/>